<comment type="function">
    <text evidence="1">Promotes RNA polymerase assembly. Latches the N- and C-terminal regions of the beta' subunit thereby facilitating its interaction with the beta and alpha subunits.</text>
</comment>
<comment type="catalytic activity">
    <reaction evidence="1">
        <text>RNA(n) + a ribonucleoside 5'-triphosphate = RNA(n+1) + diphosphate</text>
        <dbReference type="Rhea" id="RHEA:21248"/>
        <dbReference type="Rhea" id="RHEA-COMP:14527"/>
        <dbReference type="Rhea" id="RHEA-COMP:17342"/>
        <dbReference type="ChEBI" id="CHEBI:33019"/>
        <dbReference type="ChEBI" id="CHEBI:61557"/>
        <dbReference type="ChEBI" id="CHEBI:140395"/>
        <dbReference type="EC" id="2.7.7.6"/>
    </reaction>
</comment>
<comment type="subunit">
    <text evidence="1">The RNAP catalytic core consists of 2 alpha, 1 beta, 1 beta' and 1 omega subunit. When a sigma factor is associated with the core the holoenzyme is formed, which can initiate transcription.</text>
</comment>
<comment type="similarity">
    <text evidence="1">Belongs to the RNA polymerase subunit omega family.</text>
</comment>
<organism>
    <name type="scientific">Lactobacillus johnsonii (strain CNCM I-12250 / La1 / NCC 533)</name>
    <dbReference type="NCBI Taxonomy" id="257314"/>
    <lineage>
        <taxon>Bacteria</taxon>
        <taxon>Bacillati</taxon>
        <taxon>Bacillota</taxon>
        <taxon>Bacilli</taxon>
        <taxon>Lactobacillales</taxon>
        <taxon>Lactobacillaceae</taxon>
        <taxon>Lactobacillus</taxon>
    </lineage>
</organism>
<name>RPOZ_LACJO</name>
<reference key="1">
    <citation type="journal article" date="2004" name="Proc. Natl. Acad. Sci. U.S.A.">
        <title>The genome sequence of the probiotic intestinal bacterium Lactobacillus johnsonii NCC 533.</title>
        <authorList>
            <person name="Pridmore R.D."/>
            <person name="Berger B."/>
            <person name="Desiere F."/>
            <person name="Vilanova D."/>
            <person name="Barretto C."/>
            <person name="Pittet A.-C."/>
            <person name="Zwahlen M.-C."/>
            <person name="Rouvet M."/>
            <person name="Altermann E."/>
            <person name="Barrangou R."/>
            <person name="Mollet B."/>
            <person name="Mercenier A."/>
            <person name="Klaenhammer T."/>
            <person name="Arigoni F."/>
            <person name="Schell M.A."/>
        </authorList>
    </citation>
    <scope>NUCLEOTIDE SEQUENCE [LARGE SCALE GENOMIC DNA]</scope>
    <source>
        <strain>CNCM I-1225 / La1 / NCC 533</strain>
    </source>
</reference>
<sequence>MKITYPSIDKLLSRVNSRYSLSVLAAKRAHEIQAGAPLALKHYKSDKAVGEALEEIAAGKVTIDPEHREDIG</sequence>
<evidence type="ECO:0000255" key="1">
    <source>
        <dbReference type="HAMAP-Rule" id="MF_00366"/>
    </source>
</evidence>
<proteinExistence type="inferred from homology"/>
<dbReference type="EC" id="2.7.7.6" evidence="1"/>
<dbReference type="EMBL" id="AE017198">
    <property type="protein sequence ID" value="AAS09310.1"/>
    <property type="molecule type" value="Genomic_DNA"/>
</dbReference>
<dbReference type="RefSeq" id="WP_004897072.1">
    <property type="nucleotide sequence ID" value="NC_005362.1"/>
</dbReference>
<dbReference type="SMR" id="Q74IM7"/>
<dbReference type="GeneID" id="83570131"/>
<dbReference type="KEGG" id="ljo:LJ_1542"/>
<dbReference type="eggNOG" id="COG1758">
    <property type="taxonomic scope" value="Bacteria"/>
</dbReference>
<dbReference type="HOGENOM" id="CLU_125406_6_0_9"/>
<dbReference type="Proteomes" id="UP000000581">
    <property type="component" value="Chromosome"/>
</dbReference>
<dbReference type="GO" id="GO:0000428">
    <property type="term" value="C:DNA-directed RNA polymerase complex"/>
    <property type="evidence" value="ECO:0007669"/>
    <property type="project" value="UniProtKB-KW"/>
</dbReference>
<dbReference type="GO" id="GO:0003677">
    <property type="term" value="F:DNA binding"/>
    <property type="evidence" value="ECO:0007669"/>
    <property type="project" value="UniProtKB-UniRule"/>
</dbReference>
<dbReference type="GO" id="GO:0003899">
    <property type="term" value="F:DNA-directed RNA polymerase activity"/>
    <property type="evidence" value="ECO:0007669"/>
    <property type="project" value="UniProtKB-UniRule"/>
</dbReference>
<dbReference type="GO" id="GO:0006351">
    <property type="term" value="P:DNA-templated transcription"/>
    <property type="evidence" value="ECO:0007669"/>
    <property type="project" value="UniProtKB-UniRule"/>
</dbReference>
<dbReference type="Gene3D" id="3.90.940.10">
    <property type="match status" value="1"/>
</dbReference>
<dbReference type="HAMAP" id="MF_00366">
    <property type="entry name" value="RNApol_bact_RpoZ"/>
    <property type="match status" value="1"/>
</dbReference>
<dbReference type="InterPro" id="IPR003716">
    <property type="entry name" value="DNA-dir_RNA_pol_omega"/>
</dbReference>
<dbReference type="InterPro" id="IPR006110">
    <property type="entry name" value="Pol_omega/Rpo6/RPB6"/>
</dbReference>
<dbReference type="InterPro" id="IPR036161">
    <property type="entry name" value="RPB6/omega-like_sf"/>
</dbReference>
<dbReference type="NCBIfam" id="TIGR00690">
    <property type="entry name" value="rpoZ"/>
    <property type="match status" value="1"/>
</dbReference>
<dbReference type="PANTHER" id="PTHR34476">
    <property type="entry name" value="DNA-DIRECTED RNA POLYMERASE SUBUNIT OMEGA"/>
    <property type="match status" value="1"/>
</dbReference>
<dbReference type="PANTHER" id="PTHR34476:SF1">
    <property type="entry name" value="DNA-DIRECTED RNA POLYMERASE SUBUNIT OMEGA"/>
    <property type="match status" value="1"/>
</dbReference>
<dbReference type="Pfam" id="PF01192">
    <property type="entry name" value="RNA_pol_Rpb6"/>
    <property type="match status" value="1"/>
</dbReference>
<dbReference type="SMART" id="SM01409">
    <property type="entry name" value="RNA_pol_Rpb6"/>
    <property type="match status" value="1"/>
</dbReference>
<dbReference type="SUPFAM" id="SSF63562">
    <property type="entry name" value="RPB6/omega subunit-like"/>
    <property type="match status" value="1"/>
</dbReference>
<feature type="chain" id="PRO_0000237468" description="DNA-directed RNA polymerase subunit omega">
    <location>
        <begin position="1"/>
        <end position="72"/>
    </location>
</feature>
<protein>
    <recommendedName>
        <fullName evidence="1">DNA-directed RNA polymerase subunit omega</fullName>
        <shortName evidence="1">RNAP omega subunit</shortName>
        <ecNumber evidence="1">2.7.7.6</ecNumber>
    </recommendedName>
    <alternativeName>
        <fullName evidence="1">RNA polymerase omega subunit</fullName>
    </alternativeName>
    <alternativeName>
        <fullName evidence="1">Transcriptase subunit omega</fullName>
    </alternativeName>
</protein>
<keyword id="KW-0240">DNA-directed RNA polymerase</keyword>
<keyword id="KW-0548">Nucleotidyltransferase</keyword>
<keyword id="KW-0804">Transcription</keyword>
<keyword id="KW-0808">Transferase</keyword>
<accession>Q74IM7</accession>
<gene>
    <name evidence="1" type="primary">rpoZ</name>
    <name type="ordered locus">LJ_1542</name>
</gene>